<comment type="function">
    <text evidence="1">Component of the cytochrome b6-f complex, which mediates electron transfer between photosystem II (PSII) and photosystem I (PSI), cyclic electron flow around PSI, and state transitions. PetG is required for either the stability or assembly of the cytochrome b6-f complex.</text>
</comment>
<comment type="subunit">
    <text evidence="1">The 4 large subunits of the cytochrome b6-f complex are cytochrome b6, subunit IV (17 kDa polypeptide, PetD), cytochrome f and the Rieske protein, while the 4 small subunits are PetG, PetL, PetM and PetN. The complex functions as a dimer.</text>
</comment>
<comment type="subcellular location">
    <subcellularLocation>
        <location evidence="1">Plastid</location>
        <location evidence="1">Chloroplast thylakoid membrane</location>
        <topology evidence="1">Single-pass membrane protein</topology>
    </subcellularLocation>
</comment>
<comment type="similarity">
    <text evidence="1">Belongs to the PetG family.</text>
</comment>
<evidence type="ECO:0000255" key="1">
    <source>
        <dbReference type="HAMAP-Rule" id="MF_00432"/>
    </source>
</evidence>
<reference key="1">
    <citation type="journal article" date="2007" name="BMC Genomics">
        <title>The chloroplast genome sequence of the green alga Leptosira terrestris: multiple losses of the inverted repeat and extensive genome rearrangements within the Trebouxiophyceae.</title>
        <authorList>
            <person name="de Cambiaire J.-C."/>
            <person name="Otis C."/>
            <person name="Turmel M."/>
            <person name="Lemieux C."/>
        </authorList>
    </citation>
    <scope>NUCLEOTIDE SEQUENCE [LARGE SCALE GENOMIC DNA]</scope>
    <source>
        <strain>CCAP 463/2 / UTEX 333</strain>
    </source>
</reference>
<proteinExistence type="inferred from homology"/>
<gene>
    <name evidence="1" type="primary">petG</name>
</gene>
<geneLocation type="chloroplast"/>
<keyword id="KW-0150">Chloroplast</keyword>
<keyword id="KW-0249">Electron transport</keyword>
<keyword id="KW-0472">Membrane</keyword>
<keyword id="KW-0602">Photosynthesis</keyword>
<keyword id="KW-0934">Plastid</keyword>
<keyword id="KW-0793">Thylakoid</keyword>
<keyword id="KW-0812">Transmembrane</keyword>
<keyword id="KW-1133">Transmembrane helix</keyword>
<keyword id="KW-0813">Transport</keyword>
<protein>
    <recommendedName>
        <fullName evidence="1">Cytochrome b6-f complex subunit 5</fullName>
    </recommendedName>
    <alternativeName>
        <fullName evidence="1">Cytochrome b6-f complex subunit PetG</fullName>
    </alternativeName>
    <alternativeName>
        <fullName evidence="1">Cytochrome b6-f complex subunit V</fullName>
    </alternativeName>
</protein>
<feature type="chain" id="PRO_0000355395" description="Cytochrome b6-f complex subunit 5">
    <location>
        <begin position="1"/>
        <end position="39"/>
    </location>
</feature>
<feature type="transmembrane region" description="Helical" evidence="1">
    <location>
        <begin position="5"/>
        <end position="25"/>
    </location>
</feature>
<sequence length="39" mass="4256">MVEALLSGIVLGLVPVTILGLFVTAYLQYRRGDRVTSSF</sequence>
<dbReference type="EMBL" id="EF506945">
    <property type="protein sequence ID" value="ABO69290.1"/>
    <property type="molecule type" value="Genomic_DNA"/>
</dbReference>
<dbReference type="RefSeq" id="YP_001382146.1">
    <property type="nucleotide sequence ID" value="NC_009681.1"/>
</dbReference>
<dbReference type="SMR" id="A6YG69"/>
<dbReference type="GeneID" id="5383756"/>
<dbReference type="GO" id="GO:0009535">
    <property type="term" value="C:chloroplast thylakoid membrane"/>
    <property type="evidence" value="ECO:0007669"/>
    <property type="project" value="UniProtKB-SubCell"/>
</dbReference>
<dbReference type="GO" id="GO:0009512">
    <property type="term" value="C:cytochrome b6f complex"/>
    <property type="evidence" value="ECO:0007669"/>
    <property type="project" value="InterPro"/>
</dbReference>
<dbReference type="GO" id="GO:0045158">
    <property type="term" value="F:electron transporter, transferring electrons within cytochrome b6/f complex of photosystem II activity"/>
    <property type="evidence" value="ECO:0007669"/>
    <property type="project" value="UniProtKB-UniRule"/>
</dbReference>
<dbReference type="GO" id="GO:0017004">
    <property type="term" value="P:cytochrome complex assembly"/>
    <property type="evidence" value="ECO:0007669"/>
    <property type="project" value="UniProtKB-UniRule"/>
</dbReference>
<dbReference type="GO" id="GO:0015979">
    <property type="term" value="P:photosynthesis"/>
    <property type="evidence" value="ECO:0007669"/>
    <property type="project" value="UniProtKB-KW"/>
</dbReference>
<dbReference type="HAMAP" id="MF_00432">
    <property type="entry name" value="Cytb6_f_PetG"/>
    <property type="match status" value="1"/>
</dbReference>
<dbReference type="InterPro" id="IPR003683">
    <property type="entry name" value="Cyt_6/f_cplx_su5"/>
</dbReference>
<dbReference type="InterPro" id="IPR036099">
    <property type="entry name" value="Cyt_6/f_cplx_su5_sf"/>
</dbReference>
<dbReference type="NCBIfam" id="NF001907">
    <property type="entry name" value="PRK00665.1"/>
    <property type="match status" value="1"/>
</dbReference>
<dbReference type="Pfam" id="PF02529">
    <property type="entry name" value="PetG"/>
    <property type="match status" value="1"/>
</dbReference>
<dbReference type="PIRSF" id="PIRSF000034">
    <property type="entry name" value="Cyt_b6-f_V"/>
    <property type="match status" value="1"/>
</dbReference>
<dbReference type="SUPFAM" id="SSF103446">
    <property type="entry name" value="PetG subunit of the cytochrome b6f complex"/>
    <property type="match status" value="1"/>
</dbReference>
<organism>
    <name type="scientific">Pleurastrum terricola</name>
    <name type="common">Filamentous green alga</name>
    <name type="synonym">Leptosira terrestris</name>
    <dbReference type="NCBI Taxonomy" id="34116"/>
    <lineage>
        <taxon>Eukaryota</taxon>
        <taxon>Viridiplantae</taxon>
        <taxon>Chlorophyta</taxon>
        <taxon>core chlorophytes</taxon>
        <taxon>Chlorophyceae</taxon>
        <taxon>CS clade</taxon>
        <taxon>Chlamydomonadales</taxon>
        <taxon>Pleurastraceae</taxon>
        <taxon>Pleurastrum</taxon>
    </lineage>
</organism>
<name>PETG_PLETE</name>
<accession>A6YG69</accession>